<name>RS17_CYTH3</name>
<keyword id="KW-1185">Reference proteome</keyword>
<keyword id="KW-0687">Ribonucleoprotein</keyword>
<keyword id="KW-0689">Ribosomal protein</keyword>
<keyword id="KW-0694">RNA-binding</keyword>
<keyword id="KW-0699">rRNA-binding</keyword>
<gene>
    <name evidence="1" type="primary">rpsQ</name>
    <name type="ordered locus">CHU_3153</name>
</gene>
<evidence type="ECO:0000255" key="1">
    <source>
        <dbReference type="HAMAP-Rule" id="MF_01345"/>
    </source>
</evidence>
<evidence type="ECO:0000305" key="2"/>
<feature type="chain" id="PRO_1000054946" description="Small ribosomal subunit protein uS17">
    <location>
        <begin position="1"/>
        <end position="87"/>
    </location>
</feature>
<proteinExistence type="inferred from homology"/>
<reference key="1">
    <citation type="journal article" date="2007" name="Appl. Environ. Microbiol.">
        <title>Genome sequence of the cellulolytic gliding bacterium Cytophaga hutchinsonii.</title>
        <authorList>
            <person name="Xie G."/>
            <person name="Bruce D.C."/>
            <person name="Challacombe J.F."/>
            <person name="Chertkov O."/>
            <person name="Detter J.C."/>
            <person name="Gilna P."/>
            <person name="Han C.S."/>
            <person name="Lucas S."/>
            <person name="Misra M."/>
            <person name="Myers G.L."/>
            <person name="Richardson P."/>
            <person name="Tapia R."/>
            <person name="Thayer N."/>
            <person name="Thompson L.S."/>
            <person name="Brettin T.S."/>
            <person name="Henrissat B."/>
            <person name="Wilson D.B."/>
            <person name="McBride M.J."/>
        </authorList>
    </citation>
    <scope>NUCLEOTIDE SEQUENCE [LARGE SCALE GENOMIC DNA]</scope>
    <source>
        <strain>ATCC 33406 / DSM 1761 / JCM 20678 / CIP 103989 / IAM 12607 / NBRC 15051 / NCIMB 9469 / D465</strain>
    </source>
</reference>
<organism>
    <name type="scientific">Cytophaga hutchinsonii (strain ATCC 33406 / DSM 1761 / CIP 103989 / NBRC 15051 / NCIMB 9469 / D465)</name>
    <dbReference type="NCBI Taxonomy" id="269798"/>
    <lineage>
        <taxon>Bacteria</taxon>
        <taxon>Pseudomonadati</taxon>
        <taxon>Bacteroidota</taxon>
        <taxon>Cytophagia</taxon>
        <taxon>Cytophagales</taxon>
        <taxon>Cytophagaceae</taxon>
        <taxon>Cytophaga</taxon>
    </lineage>
</organism>
<comment type="function">
    <text evidence="1">One of the primary rRNA binding proteins, it binds specifically to the 5'-end of 16S ribosomal RNA.</text>
</comment>
<comment type="subunit">
    <text evidence="1">Part of the 30S ribosomal subunit.</text>
</comment>
<comment type="similarity">
    <text evidence="1">Belongs to the universal ribosomal protein uS17 family.</text>
</comment>
<protein>
    <recommendedName>
        <fullName evidence="1">Small ribosomal subunit protein uS17</fullName>
    </recommendedName>
    <alternativeName>
        <fullName evidence="2">30S ribosomal protein S17</fullName>
    </alternativeName>
</protein>
<accession>Q11QC1</accession>
<sequence>MEEILRNARKERTGKVVSNKMNKSITVAVERKVKHAKYGKFIHKTTKLMAHDENQECGIGDTVRVMETRPLSKLKRWRLVEVIEKAK</sequence>
<dbReference type="EMBL" id="CP000383">
    <property type="protein sequence ID" value="ABG60393.1"/>
    <property type="molecule type" value="Genomic_DNA"/>
</dbReference>
<dbReference type="RefSeq" id="WP_011586502.1">
    <property type="nucleotide sequence ID" value="NC_008255.1"/>
</dbReference>
<dbReference type="SMR" id="Q11QC1"/>
<dbReference type="STRING" id="269798.CHU_3153"/>
<dbReference type="KEGG" id="chu:CHU_3153"/>
<dbReference type="eggNOG" id="COG0186">
    <property type="taxonomic scope" value="Bacteria"/>
</dbReference>
<dbReference type="HOGENOM" id="CLU_073626_1_1_10"/>
<dbReference type="OrthoDB" id="9811714at2"/>
<dbReference type="Proteomes" id="UP000001822">
    <property type="component" value="Chromosome"/>
</dbReference>
<dbReference type="GO" id="GO:0022627">
    <property type="term" value="C:cytosolic small ribosomal subunit"/>
    <property type="evidence" value="ECO:0007669"/>
    <property type="project" value="TreeGrafter"/>
</dbReference>
<dbReference type="GO" id="GO:0019843">
    <property type="term" value="F:rRNA binding"/>
    <property type="evidence" value="ECO:0007669"/>
    <property type="project" value="UniProtKB-UniRule"/>
</dbReference>
<dbReference type="GO" id="GO:0003735">
    <property type="term" value="F:structural constituent of ribosome"/>
    <property type="evidence" value="ECO:0007669"/>
    <property type="project" value="InterPro"/>
</dbReference>
<dbReference type="GO" id="GO:0006412">
    <property type="term" value="P:translation"/>
    <property type="evidence" value="ECO:0007669"/>
    <property type="project" value="UniProtKB-UniRule"/>
</dbReference>
<dbReference type="CDD" id="cd00364">
    <property type="entry name" value="Ribosomal_uS17"/>
    <property type="match status" value="1"/>
</dbReference>
<dbReference type="FunFam" id="2.40.50.140:FF:000123">
    <property type="entry name" value="30S ribosomal protein S17"/>
    <property type="match status" value="1"/>
</dbReference>
<dbReference type="Gene3D" id="2.40.50.140">
    <property type="entry name" value="Nucleic acid-binding proteins"/>
    <property type="match status" value="1"/>
</dbReference>
<dbReference type="HAMAP" id="MF_01345_B">
    <property type="entry name" value="Ribosomal_uS17_B"/>
    <property type="match status" value="1"/>
</dbReference>
<dbReference type="InterPro" id="IPR012340">
    <property type="entry name" value="NA-bd_OB-fold"/>
</dbReference>
<dbReference type="InterPro" id="IPR000266">
    <property type="entry name" value="Ribosomal_uS17"/>
</dbReference>
<dbReference type="InterPro" id="IPR019984">
    <property type="entry name" value="Ribosomal_uS17_bact/chlr"/>
</dbReference>
<dbReference type="InterPro" id="IPR019979">
    <property type="entry name" value="Ribosomal_uS17_CS"/>
</dbReference>
<dbReference type="NCBIfam" id="NF004123">
    <property type="entry name" value="PRK05610.1"/>
    <property type="match status" value="1"/>
</dbReference>
<dbReference type="NCBIfam" id="TIGR03635">
    <property type="entry name" value="uS17_bact"/>
    <property type="match status" value="1"/>
</dbReference>
<dbReference type="PANTHER" id="PTHR10744">
    <property type="entry name" value="40S RIBOSOMAL PROTEIN S11 FAMILY MEMBER"/>
    <property type="match status" value="1"/>
</dbReference>
<dbReference type="PANTHER" id="PTHR10744:SF1">
    <property type="entry name" value="SMALL RIBOSOMAL SUBUNIT PROTEIN US17M"/>
    <property type="match status" value="1"/>
</dbReference>
<dbReference type="Pfam" id="PF00366">
    <property type="entry name" value="Ribosomal_S17"/>
    <property type="match status" value="1"/>
</dbReference>
<dbReference type="PRINTS" id="PR00973">
    <property type="entry name" value="RIBOSOMALS17"/>
</dbReference>
<dbReference type="SUPFAM" id="SSF50249">
    <property type="entry name" value="Nucleic acid-binding proteins"/>
    <property type="match status" value="1"/>
</dbReference>
<dbReference type="PROSITE" id="PS00056">
    <property type="entry name" value="RIBOSOMAL_S17"/>
    <property type="match status" value="1"/>
</dbReference>